<reference key="1">
    <citation type="journal article" date="2006" name="J. Bacteriol.">
        <title>Complete genome sequence of Yersinia pestis strains Antiqua and Nepal516: evidence of gene reduction in an emerging pathogen.</title>
        <authorList>
            <person name="Chain P.S.G."/>
            <person name="Hu P."/>
            <person name="Malfatti S.A."/>
            <person name="Radnedge L."/>
            <person name="Larimer F."/>
            <person name="Vergez L.M."/>
            <person name="Worsham P."/>
            <person name="Chu M.C."/>
            <person name="Andersen G.L."/>
        </authorList>
    </citation>
    <scope>NUCLEOTIDE SEQUENCE [LARGE SCALE GENOMIC DNA]</scope>
    <source>
        <strain>Antiqua</strain>
    </source>
</reference>
<accession>Q1C2W3</accession>
<comment type="function">
    <text evidence="1">This is one of the proteins that bind and probably mediate the attachment of the 5S RNA into the large ribosomal subunit, where it forms part of the central protuberance.</text>
</comment>
<comment type="subunit">
    <text evidence="1">Part of the 50S ribosomal subunit; part of the 5S rRNA/L5/L18/L25 subcomplex. Contacts the 5S and 23S rRNAs.</text>
</comment>
<comment type="similarity">
    <text evidence="1">Belongs to the universal ribosomal protein uL18 family.</text>
</comment>
<gene>
    <name evidence="1" type="primary">rplR</name>
    <name type="ordered locus">YPA_3247</name>
</gene>
<sequence length="117" mass="12811">MDKKAARIRRATRARRKLKELGATRLVVHRTPRHIYAQVIAPNGSEILVAASTVEKAINEQLKYAGNKDAAAAVGKTIAERALEKGITKVSFDRSGFQYHGRVQALADAAREAGLQF</sequence>
<dbReference type="EMBL" id="CP000308">
    <property type="protein sequence ID" value="ABG15209.1"/>
    <property type="molecule type" value="Genomic_DNA"/>
</dbReference>
<dbReference type="RefSeq" id="WP_002213336.1">
    <property type="nucleotide sequence ID" value="NZ_CP009906.1"/>
</dbReference>
<dbReference type="SMR" id="Q1C2W3"/>
<dbReference type="GeneID" id="97454247"/>
<dbReference type="KEGG" id="ypa:YPA_3247"/>
<dbReference type="Proteomes" id="UP000001971">
    <property type="component" value="Chromosome"/>
</dbReference>
<dbReference type="GO" id="GO:0022625">
    <property type="term" value="C:cytosolic large ribosomal subunit"/>
    <property type="evidence" value="ECO:0007669"/>
    <property type="project" value="TreeGrafter"/>
</dbReference>
<dbReference type="GO" id="GO:0008097">
    <property type="term" value="F:5S rRNA binding"/>
    <property type="evidence" value="ECO:0007669"/>
    <property type="project" value="TreeGrafter"/>
</dbReference>
<dbReference type="GO" id="GO:0003735">
    <property type="term" value="F:structural constituent of ribosome"/>
    <property type="evidence" value="ECO:0007669"/>
    <property type="project" value="InterPro"/>
</dbReference>
<dbReference type="GO" id="GO:0006412">
    <property type="term" value="P:translation"/>
    <property type="evidence" value="ECO:0007669"/>
    <property type="project" value="UniProtKB-UniRule"/>
</dbReference>
<dbReference type="CDD" id="cd00432">
    <property type="entry name" value="Ribosomal_L18_L5e"/>
    <property type="match status" value="1"/>
</dbReference>
<dbReference type="FunFam" id="3.30.420.100:FF:000001">
    <property type="entry name" value="50S ribosomal protein L18"/>
    <property type="match status" value="1"/>
</dbReference>
<dbReference type="Gene3D" id="3.30.420.100">
    <property type="match status" value="1"/>
</dbReference>
<dbReference type="HAMAP" id="MF_01337_B">
    <property type="entry name" value="Ribosomal_uL18_B"/>
    <property type="match status" value="1"/>
</dbReference>
<dbReference type="InterPro" id="IPR004389">
    <property type="entry name" value="Ribosomal_uL18_bac-type"/>
</dbReference>
<dbReference type="InterPro" id="IPR005484">
    <property type="entry name" value="Ribosomal_uL18_bac/euk"/>
</dbReference>
<dbReference type="NCBIfam" id="TIGR00060">
    <property type="entry name" value="L18_bact"/>
    <property type="match status" value="1"/>
</dbReference>
<dbReference type="PANTHER" id="PTHR12899">
    <property type="entry name" value="39S RIBOSOMAL PROTEIN L18, MITOCHONDRIAL"/>
    <property type="match status" value="1"/>
</dbReference>
<dbReference type="PANTHER" id="PTHR12899:SF3">
    <property type="entry name" value="LARGE RIBOSOMAL SUBUNIT PROTEIN UL18M"/>
    <property type="match status" value="1"/>
</dbReference>
<dbReference type="Pfam" id="PF00861">
    <property type="entry name" value="Ribosomal_L18p"/>
    <property type="match status" value="1"/>
</dbReference>
<dbReference type="SUPFAM" id="SSF53137">
    <property type="entry name" value="Translational machinery components"/>
    <property type="match status" value="1"/>
</dbReference>
<proteinExistence type="inferred from homology"/>
<protein>
    <recommendedName>
        <fullName evidence="1">Large ribosomal subunit protein uL18</fullName>
    </recommendedName>
    <alternativeName>
        <fullName evidence="2">50S ribosomal protein L18</fullName>
    </alternativeName>
</protein>
<feature type="chain" id="PRO_1000053139" description="Large ribosomal subunit protein uL18">
    <location>
        <begin position="1"/>
        <end position="117"/>
    </location>
</feature>
<organism>
    <name type="scientific">Yersinia pestis bv. Antiqua (strain Antiqua)</name>
    <dbReference type="NCBI Taxonomy" id="360102"/>
    <lineage>
        <taxon>Bacteria</taxon>
        <taxon>Pseudomonadati</taxon>
        <taxon>Pseudomonadota</taxon>
        <taxon>Gammaproteobacteria</taxon>
        <taxon>Enterobacterales</taxon>
        <taxon>Yersiniaceae</taxon>
        <taxon>Yersinia</taxon>
    </lineage>
</organism>
<name>RL18_YERPA</name>
<evidence type="ECO:0000255" key="1">
    <source>
        <dbReference type="HAMAP-Rule" id="MF_01337"/>
    </source>
</evidence>
<evidence type="ECO:0000305" key="2"/>
<keyword id="KW-0687">Ribonucleoprotein</keyword>
<keyword id="KW-0689">Ribosomal protein</keyword>
<keyword id="KW-0694">RNA-binding</keyword>
<keyword id="KW-0699">rRNA-binding</keyword>